<dbReference type="EC" id="3.6.4.13"/>
<dbReference type="EMBL" id="AM270398">
    <property type="protein sequence ID" value="CAK47270.1"/>
    <property type="molecule type" value="Genomic_DNA"/>
</dbReference>
<dbReference type="RefSeq" id="XP_001398657.1">
    <property type="nucleotide sequence ID" value="XM_001398620.2"/>
</dbReference>
<dbReference type="SMR" id="A2RA55"/>
<dbReference type="EnsemblFungi" id="CAK47270">
    <property type="protein sequence ID" value="CAK47270"/>
    <property type="gene ID" value="An18g01980"/>
</dbReference>
<dbReference type="GeneID" id="4989758"/>
<dbReference type="KEGG" id="ang:An18g01980"/>
<dbReference type="VEuPathDB" id="FungiDB:An18g01980"/>
<dbReference type="HOGENOM" id="CLU_003041_26_2_1"/>
<dbReference type="Proteomes" id="UP000006706">
    <property type="component" value="Chromosome 8L"/>
</dbReference>
<dbReference type="GO" id="GO:0005730">
    <property type="term" value="C:nucleolus"/>
    <property type="evidence" value="ECO:0007669"/>
    <property type="project" value="UniProtKB-SubCell"/>
</dbReference>
<dbReference type="GO" id="GO:0005524">
    <property type="term" value="F:ATP binding"/>
    <property type="evidence" value="ECO:0007669"/>
    <property type="project" value="UniProtKB-KW"/>
</dbReference>
<dbReference type="GO" id="GO:0016887">
    <property type="term" value="F:ATP hydrolysis activity"/>
    <property type="evidence" value="ECO:0007669"/>
    <property type="project" value="RHEA"/>
</dbReference>
<dbReference type="GO" id="GO:0003723">
    <property type="term" value="F:RNA binding"/>
    <property type="evidence" value="ECO:0007669"/>
    <property type="project" value="UniProtKB-KW"/>
</dbReference>
<dbReference type="GO" id="GO:0003724">
    <property type="term" value="F:RNA helicase activity"/>
    <property type="evidence" value="ECO:0007669"/>
    <property type="project" value="UniProtKB-EC"/>
</dbReference>
<dbReference type="GO" id="GO:0000464">
    <property type="term" value="P:endonucleolytic cleavage in ITS1 upstream of 5.8S rRNA from tricistronic rRNA transcript (SSU-rRNA, 5.8S rRNA, LSU-rRNA)"/>
    <property type="evidence" value="ECO:0007669"/>
    <property type="project" value="EnsemblFungi"/>
</dbReference>
<dbReference type="CDD" id="cd17949">
    <property type="entry name" value="DEADc_DDX31"/>
    <property type="match status" value="1"/>
</dbReference>
<dbReference type="CDD" id="cd18787">
    <property type="entry name" value="SF2_C_DEAD"/>
    <property type="match status" value="1"/>
</dbReference>
<dbReference type="Gene3D" id="3.40.50.300">
    <property type="entry name" value="P-loop containing nucleotide triphosphate hydrolases"/>
    <property type="match status" value="2"/>
</dbReference>
<dbReference type="InterPro" id="IPR011545">
    <property type="entry name" value="DEAD/DEAH_box_helicase_dom"/>
</dbReference>
<dbReference type="InterPro" id="IPR014001">
    <property type="entry name" value="Helicase_ATP-bd"/>
</dbReference>
<dbReference type="InterPro" id="IPR001650">
    <property type="entry name" value="Helicase_C-like"/>
</dbReference>
<dbReference type="InterPro" id="IPR027417">
    <property type="entry name" value="P-loop_NTPase"/>
</dbReference>
<dbReference type="InterPro" id="IPR025313">
    <property type="entry name" value="SPB4-like_CTE"/>
</dbReference>
<dbReference type="PANTHER" id="PTHR24031">
    <property type="entry name" value="RNA HELICASE"/>
    <property type="match status" value="1"/>
</dbReference>
<dbReference type="Pfam" id="PF13959">
    <property type="entry name" value="CTE_SPB4"/>
    <property type="match status" value="1"/>
</dbReference>
<dbReference type="Pfam" id="PF00270">
    <property type="entry name" value="DEAD"/>
    <property type="match status" value="1"/>
</dbReference>
<dbReference type="Pfam" id="PF00271">
    <property type="entry name" value="Helicase_C"/>
    <property type="match status" value="1"/>
</dbReference>
<dbReference type="SMART" id="SM00487">
    <property type="entry name" value="DEXDc"/>
    <property type="match status" value="1"/>
</dbReference>
<dbReference type="SMART" id="SM01178">
    <property type="entry name" value="DUF4217"/>
    <property type="match status" value="1"/>
</dbReference>
<dbReference type="SMART" id="SM00490">
    <property type="entry name" value="HELICc"/>
    <property type="match status" value="1"/>
</dbReference>
<dbReference type="SUPFAM" id="SSF52540">
    <property type="entry name" value="P-loop containing nucleoside triphosphate hydrolases"/>
    <property type="match status" value="1"/>
</dbReference>
<dbReference type="PROSITE" id="PS51192">
    <property type="entry name" value="HELICASE_ATP_BIND_1"/>
    <property type="match status" value="1"/>
</dbReference>
<dbReference type="PROSITE" id="PS51194">
    <property type="entry name" value="HELICASE_CTER"/>
    <property type="match status" value="1"/>
</dbReference>
<dbReference type="PROSITE" id="PS51195">
    <property type="entry name" value="Q_MOTIF"/>
    <property type="match status" value="1"/>
</dbReference>
<reference key="1">
    <citation type="journal article" date="2007" name="Nat. Biotechnol.">
        <title>Genome sequencing and analysis of the versatile cell factory Aspergillus niger CBS 513.88.</title>
        <authorList>
            <person name="Pel H.J."/>
            <person name="de Winde J.H."/>
            <person name="Archer D.B."/>
            <person name="Dyer P.S."/>
            <person name="Hofmann G."/>
            <person name="Schaap P.J."/>
            <person name="Turner G."/>
            <person name="de Vries R.P."/>
            <person name="Albang R."/>
            <person name="Albermann K."/>
            <person name="Andersen M.R."/>
            <person name="Bendtsen J.D."/>
            <person name="Benen J.A.E."/>
            <person name="van den Berg M."/>
            <person name="Breestraat S."/>
            <person name="Caddick M.X."/>
            <person name="Contreras R."/>
            <person name="Cornell M."/>
            <person name="Coutinho P.M."/>
            <person name="Danchin E.G.J."/>
            <person name="Debets A.J.M."/>
            <person name="Dekker P."/>
            <person name="van Dijck P.W.M."/>
            <person name="van Dijk A."/>
            <person name="Dijkhuizen L."/>
            <person name="Driessen A.J.M."/>
            <person name="d'Enfert C."/>
            <person name="Geysens S."/>
            <person name="Goosen C."/>
            <person name="Groot G.S.P."/>
            <person name="de Groot P.W.J."/>
            <person name="Guillemette T."/>
            <person name="Henrissat B."/>
            <person name="Herweijer M."/>
            <person name="van den Hombergh J.P.T.W."/>
            <person name="van den Hondel C.A.M.J.J."/>
            <person name="van der Heijden R.T.J.M."/>
            <person name="van der Kaaij R.M."/>
            <person name="Klis F.M."/>
            <person name="Kools H.J."/>
            <person name="Kubicek C.P."/>
            <person name="van Kuyk P.A."/>
            <person name="Lauber J."/>
            <person name="Lu X."/>
            <person name="van der Maarel M.J.E.C."/>
            <person name="Meulenberg R."/>
            <person name="Menke H."/>
            <person name="Mortimer M.A."/>
            <person name="Nielsen J."/>
            <person name="Oliver S.G."/>
            <person name="Olsthoorn M."/>
            <person name="Pal K."/>
            <person name="van Peij N.N.M.E."/>
            <person name="Ram A.F.J."/>
            <person name="Rinas U."/>
            <person name="Roubos J.A."/>
            <person name="Sagt C.M.J."/>
            <person name="Schmoll M."/>
            <person name="Sun J."/>
            <person name="Ussery D."/>
            <person name="Varga J."/>
            <person name="Vervecken W."/>
            <person name="van de Vondervoort P.J.J."/>
            <person name="Wedler H."/>
            <person name="Woesten H.A.B."/>
            <person name="Zeng A.-P."/>
            <person name="van Ooyen A.J.J."/>
            <person name="Visser J."/>
            <person name="Stam H."/>
        </authorList>
    </citation>
    <scope>NUCLEOTIDE SEQUENCE [LARGE SCALE GENOMIC DNA]</scope>
    <source>
        <strain>ATCC MYA-4892 / CBS 513.88 / FGSC A1513</strain>
    </source>
</reference>
<name>DBP7_ASPNC</name>
<proteinExistence type="inferred from homology"/>
<sequence length="771" mass="85517">MADDGLLLNFAIPDTTVLRPEKTKVKGGTWRDRLSAKKIAAHRTNNPRKEKSASNGEQNSNPRNPNRIQVSGPRPVKRQRIEDDDGNGGSQPRQQQQQHPGAPRQFVSSLFSKNPRPRNAVEEKNEAGAEVEDAKPTNAPLIDGLDTFTNLGLSAPLAAHLLTKLEVKAPTAIQKASITQLLKEESDAFIQAETGSGKTMAYLLPLVQRIMTISLNQKKREEGEQVQRDSGLFAIVLAPTRELCKQIAVVLEGLLRCAHWIVAGTVIGGEKKKSEKARLRKGLNILVATPGRLADHLENTQALDVSNVRWLVLDEGDRLMELGFEKELAGIIQKLDARQRPSRIPGIPAKRTTILCSATLKMTVQKLGEISLKDAVHIQADPADEDGEPRKKDEDDAFRVPAQLKQSYAIVASKLRLVTLTAFMKRTFMRKGSVMKAIIFVSCADSVDFHFEVFTRKNGDEEEKKEESEDSDEEDAEEKRKKLGASAHGTIAPATAFSNPSNPVALHRLHGSLPQHVRTATLGAFARNREPSVLICTDVASRGLDLPNVDLVVEYDPAFSAEDHLHRIGRTARLGRDGRALIFLMPGCEEGYVDILKKGYRDGGKALTRNSADDILKRGFGGNVESQNVDWEEKATEWQLDVERWALENKNYLEMARRAYQSHIRAYATHIANERSMFNIKELHLGHLAKSFALRDRPSKINVPGLRQAQADTKKDFKADRKPVAGKKRKAGGHDDDDDDVPRQTDTLTAAQKMRAKMKEHMAGASEFNLA</sequence>
<accession>A2RA55</accession>
<organism>
    <name type="scientific">Aspergillus niger (strain ATCC MYA-4892 / CBS 513.88 / FGSC A1513)</name>
    <dbReference type="NCBI Taxonomy" id="425011"/>
    <lineage>
        <taxon>Eukaryota</taxon>
        <taxon>Fungi</taxon>
        <taxon>Dikarya</taxon>
        <taxon>Ascomycota</taxon>
        <taxon>Pezizomycotina</taxon>
        <taxon>Eurotiomycetes</taxon>
        <taxon>Eurotiomycetidae</taxon>
        <taxon>Eurotiales</taxon>
        <taxon>Aspergillaceae</taxon>
        <taxon>Aspergillus</taxon>
        <taxon>Aspergillus subgen. Circumdati</taxon>
    </lineage>
</organism>
<evidence type="ECO:0000250" key="1"/>
<evidence type="ECO:0000255" key="2">
    <source>
        <dbReference type="PROSITE-ProRule" id="PRU00541"/>
    </source>
</evidence>
<evidence type="ECO:0000255" key="3">
    <source>
        <dbReference type="PROSITE-ProRule" id="PRU00542"/>
    </source>
</evidence>
<evidence type="ECO:0000256" key="4">
    <source>
        <dbReference type="SAM" id="MobiDB-lite"/>
    </source>
</evidence>
<evidence type="ECO:0000305" key="5"/>
<protein>
    <recommendedName>
        <fullName>ATP-dependent RNA helicase dbp7</fullName>
        <ecNumber>3.6.4.13</ecNumber>
    </recommendedName>
</protein>
<comment type="function">
    <text evidence="1">ATP-binding RNA helicase involved in the biogenesis of 60S ribosomal subunits and is required for the normal formation of 25S and 5.8S rRNAs.</text>
</comment>
<comment type="catalytic activity">
    <reaction>
        <text>ATP + H2O = ADP + phosphate + H(+)</text>
        <dbReference type="Rhea" id="RHEA:13065"/>
        <dbReference type="ChEBI" id="CHEBI:15377"/>
        <dbReference type="ChEBI" id="CHEBI:15378"/>
        <dbReference type="ChEBI" id="CHEBI:30616"/>
        <dbReference type="ChEBI" id="CHEBI:43474"/>
        <dbReference type="ChEBI" id="CHEBI:456216"/>
        <dbReference type="EC" id="3.6.4.13"/>
    </reaction>
</comment>
<comment type="subcellular location">
    <subcellularLocation>
        <location evidence="1">Nucleus</location>
        <location evidence="1">Nucleolus</location>
    </subcellularLocation>
</comment>
<comment type="domain">
    <text>The Q motif is unique to and characteristic of the DEAD box family of RNA helicases and controls ATP binding and hydrolysis.</text>
</comment>
<comment type="miscellaneous">
    <text>Present with 1460 molecules/cell in log phase SD medium.</text>
</comment>
<comment type="similarity">
    <text evidence="5">Belongs to the DEAD box helicase family. DDX31/DBP7 subfamily.</text>
</comment>
<keyword id="KW-0067">ATP-binding</keyword>
<keyword id="KW-0347">Helicase</keyword>
<keyword id="KW-0378">Hydrolase</keyword>
<keyword id="KW-0547">Nucleotide-binding</keyword>
<keyword id="KW-0539">Nucleus</keyword>
<keyword id="KW-1185">Reference proteome</keyword>
<keyword id="KW-0690">Ribosome biogenesis</keyword>
<keyword id="KW-0694">RNA-binding</keyword>
<keyword id="KW-0698">rRNA processing</keyword>
<feature type="chain" id="PRO_0000281707" description="ATP-dependent RNA helicase dbp7">
    <location>
        <begin position="1"/>
        <end position="771"/>
    </location>
</feature>
<feature type="domain" description="Helicase ATP-binding" evidence="2">
    <location>
        <begin position="179"/>
        <end position="378"/>
    </location>
</feature>
<feature type="domain" description="Helicase C-terminal" evidence="3">
    <location>
        <begin position="403"/>
        <end position="615"/>
    </location>
</feature>
<feature type="region of interest" description="Disordered" evidence="4">
    <location>
        <begin position="23"/>
        <end position="139"/>
    </location>
</feature>
<feature type="region of interest" description="Disordered" evidence="4">
    <location>
        <begin position="458"/>
        <end position="485"/>
    </location>
</feature>
<feature type="region of interest" description="Disordered" evidence="4">
    <location>
        <begin position="703"/>
        <end position="771"/>
    </location>
</feature>
<feature type="short sequence motif" description="Q motif">
    <location>
        <begin position="146"/>
        <end position="175"/>
    </location>
</feature>
<feature type="short sequence motif" description="DEAD box">
    <location>
        <begin position="314"/>
        <end position="317"/>
    </location>
</feature>
<feature type="compositionally biased region" description="Basic and acidic residues" evidence="4">
    <location>
        <begin position="23"/>
        <end position="35"/>
    </location>
</feature>
<feature type="compositionally biased region" description="Polar residues" evidence="4">
    <location>
        <begin position="53"/>
        <end position="69"/>
    </location>
</feature>
<feature type="compositionally biased region" description="Low complexity" evidence="4">
    <location>
        <begin position="90"/>
        <end position="105"/>
    </location>
</feature>
<feature type="compositionally biased region" description="Basic and acidic residues" evidence="4">
    <location>
        <begin position="119"/>
        <end position="135"/>
    </location>
</feature>
<feature type="compositionally biased region" description="Acidic residues" evidence="4">
    <location>
        <begin position="460"/>
        <end position="476"/>
    </location>
</feature>
<feature type="compositionally biased region" description="Basic and acidic residues" evidence="4">
    <location>
        <begin position="712"/>
        <end position="723"/>
    </location>
</feature>
<feature type="binding site" evidence="2">
    <location>
        <begin position="192"/>
        <end position="199"/>
    </location>
    <ligand>
        <name>ATP</name>
        <dbReference type="ChEBI" id="CHEBI:30616"/>
    </ligand>
</feature>
<gene>
    <name type="primary">dbp7</name>
    <name type="ORF">An18g01980</name>
</gene>